<gene>
    <name evidence="1" type="primary">sspH3</name>
    <name type="ordered locus">GTNG_2874</name>
</gene>
<name>SSPH3_GEOTN</name>
<keyword id="KW-0749">Sporulation</keyword>
<proteinExistence type="inferred from homology"/>
<feature type="chain" id="PRO_0000329135" description="Small, acid-soluble spore protein H 3">
    <location>
        <begin position="1"/>
        <end position="65"/>
    </location>
</feature>
<organism>
    <name type="scientific">Geobacillus thermodenitrificans (strain NG80-2)</name>
    <dbReference type="NCBI Taxonomy" id="420246"/>
    <lineage>
        <taxon>Bacteria</taxon>
        <taxon>Bacillati</taxon>
        <taxon>Bacillota</taxon>
        <taxon>Bacilli</taxon>
        <taxon>Bacillales</taxon>
        <taxon>Anoxybacillaceae</taxon>
        <taxon>Geobacillus</taxon>
    </lineage>
</organism>
<reference key="1">
    <citation type="journal article" date="2007" name="Proc. Natl. Acad. Sci. U.S.A.">
        <title>Genome and proteome of long-chain alkane degrading Geobacillus thermodenitrificans NG80-2 isolated from a deep-subsurface oil reservoir.</title>
        <authorList>
            <person name="Feng L."/>
            <person name="Wang W."/>
            <person name="Cheng J."/>
            <person name="Ren Y."/>
            <person name="Zhao G."/>
            <person name="Gao C."/>
            <person name="Tang Y."/>
            <person name="Liu X."/>
            <person name="Han W."/>
            <person name="Peng X."/>
            <person name="Liu R."/>
            <person name="Wang L."/>
        </authorList>
    </citation>
    <scope>NUCLEOTIDE SEQUENCE [LARGE SCALE GENOMIC DNA]</scope>
    <source>
        <strain>NG80-2</strain>
    </source>
</reference>
<accession>A4ISB5</accession>
<comment type="subcellular location">
    <subcellularLocation>
        <location evidence="1">Spore core</location>
    </subcellularLocation>
</comment>
<comment type="induction">
    <text evidence="1">Expressed only in the forespore compartment of sporulating cells.</text>
</comment>
<comment type="similarity">
    <text evidence="1">Belongs to the SspH family.</text>
</comment>
<protein>
    <recommendedName>
        <fullName evidence="1">Small, acid-soluble spore protein H 3</fullName>
        <shortName evidence="1">SASP H 3</shortName>
    </recommendedName>
</protein>
<evidence type="ECO:0000255" key="1">
    <source>
        <dbReference type="HAMAP-Rule" id="MF_00667"/>
    </source>
</evidence>
<sequence length="65" mass="7415">MDMNRVKQIVSSPADIPVYYNGVSVWIDGYDEENQMATVHLRDGRLNERRDVPVAELEEKGEAAH</sequence>
<dbReference type="EMBL" id="CP000557">
    <property type="protein sequence ID" value="ABO68219.1"/>
    <property type="molecule type" value="Genomic_DNA"/>
</dbReference>
<dbReference type="RefSeq" id="WP_008881789.1">
    <property type="nucleotide sequence ID" value="NC_009328.1"/>
</dbReference>
<dbReference type="GeneID" id="87623029"/>
<dbReference type="KEGG" id="gtn:GTNG_2874"/>
<dbReference type="eggNOG" id="ENOG50330J3">
    <property type="taxonomic scope" value="Bacteria"/>
</dbReference>
<dbReference type="HOGENOM" id="CLU_191960_0_0_9"/>
<dbReference type="Proteomes" id="UP000001578">
    <property type="component" value="Chromosome"/>
</dbReference>
<dbReference type="GO" id="GO:0042601">
    <property type="term" value="C:endospore-forming forespore"/>
    <property type="evidence" value="ECO:0007669"/>
    <property type="project" value="InterPro"/>
</dbReference>
<dbReference type="GO" id="GO:0030436">
    <property type="term" value="P:asexual sporulation"/>
    <property type="evidence" value="ECO:0007669"/>
    <property type="project" value="UniProtKB-UniRule"/>
</dbReference>
<dbReference type="GO" id="GO:0030435">
    <property type="term" value="P:sporulation resulting in formation of a cellular spore"/>
    <property type="evidence" value="ECO:0007669"/>
    <property type="project" value="UniProtKB-KW"/>
</dbReference>
<dbReference type="HAMAP" id="MF_00667">
    <property type="entry name" value="SspH"/>
    <property type="match status" value="1"/>
</dbReference>
<dbReference type="InterPro" id="IPR012610">
    <property type="entry name" value="SASP_SspH"/>
</dbReference>
<dbReference type="NCBIfam" id="TIGR02861">
    <property type="entry name" value="SASP_H"/>
    <property type="match status" value="1"/>
</dbReference>
<dbReference type="Pfam" id="PF08141">
    <property type="entry name" value="SspH"/>
    <property type="match status" value="1"/>
</dbReference>